<evidence type="ECO:0000255" key="1">
    <source>
        <dbReference type="HAMAP-Rule" id="MF_02127"/>
    </source>
</evidence>
<evidence type="ECO:0000305" key="2"/>
<protein>
    <recommendedName>
        <fullName evidence="1">Glucose 1-dehydrogenase 2</fullName>
        <shortName evidence="1">GDH 2</shortName>
        <shortName evidence="1">GlcDH 2</shortName>
        <ecNumber evidence="1">1.1.1.47</ecNumber>
    </recommendedName>
</protein>
<name>GLCD2_VULM7</name>
<sequence length="348" mass="37449">MKAVTVIPGIPESLRLMDVSKPNPNKGQVLLKPIRVGVCGTDKEIIEGRYGKAPEGNQYLILGHEAVAEVVEIGDGVDNAGVGDIVVPTVRRPLNCDLPVDFCPVGHYLEHGIWGLHGHAAEYSVTDAKYLVKVPKEIVDVAVLTEPLSVVEKGIDMAMRIGQARFDWKPRTALVLGAGPVGLLATMVLRLMGLSTVTTATRPPDSLKAKLVKELGGTYVDSAVGQISGEFDIVVEATGSPQVINEGLGHIAPNGVYVLLGVYPSGGSLNNLGELMTSVVLNNKVIVGSVNAGIKHFEMALEHLRRAKDEFNNWPAKLITKRANLSNYQEAYTWTHDDIKTVLEIIQS</sequence>
<gene>
    <name evidence="1" type="primary">gdh2</name>
    <name type="ordered locus">VMUT_1235</name>
</gene>
<organism>
    <name type="scientific">Vulcanisaeta moutnovskia (strain 768-28)</name>
    <dbReference type="NCBI Taxonomy" id="985053"/>
    <lineage>
        <taxon>Archaea</taxon>
        <taxon>Thermoproteota</taxon>
        <taxon>Thermoprotei</taxon>
        <taxon>Thermoproteales</taxon>
        <taxon>Thermoproteaceae</taxon>
        <taxon>Vulcanisaeta</taxon>
    </lineage>
</organism>
<reference key="1">
    <citation type="journal article" date="2011" name="J. Bacteriol.">
        <title>Complete genome sequence of 'Vulcanisaeta moutnovskia' strain 768-28, a novel member of the hyperthermophilic crenarchaeal genus vulcanisaeta.</title>
        <authorList>
            <person name="Gumerov V.M."/>
            <person name="Mardanov A.V."/>
            <person name="Beletsky A.V."/>
            <person name="Prokofeva M.I."/>
            <person name="Bonch-Osmolovskaya E.A."/>
            <person name="Ravin N.V."/>
            <person name="Skryabin K.G."/>
        </authorList>
    </citation>
    <scope>NUCLEOTIDE SEQUENCE [LARGE SCALE GENOMIC DNA]</scope>
    <source>
        <strain>768-28</strain>
    </source>
</reference>
<comment type="function">
    <text evidence="1">Catalyzes the NAD(P)(+)-dependent oxidation of D-glucose to D-gluconate via gluconolactone. Can utilize both NAD(+) and NADP(+) as electron acceptor. Is involved in the degradation of glucose through a non-phosphorylative variant of the Entner-Doudoroff pathway.</text>
</comment>
<comment type="catalytic activity">
    <reaction evidence="1">
        <text>D-glucose + NAD(+) = D-glucono-1,5-lactone + NADH + H(+)</text>
        <dbReference type="Rhea" id="RHEA:14293"/>
        <dbReference type="ChEBI" id="CHEBI:4167"/>
        <dbReference type="ChEBI" id="CHEBI:15378"/>
        <dbReference type="ChEBI" id="CHEBI:16217"/>
        <dbReference type="ChEBI" id="CHEBI:57540"/>
        <dbReference type="ChEBI" id="CHEBI:57945"/>
        <dbReference type="EC" id="1.1.1.47"/>
    </reaction>
</comment>
<comment type="catalytic activity">
    <reaction evidence="1">
        <text>D-glucose + NADP(+) = D-glucono-1,5-lactone + NADPH + H(+)</text>
        <dbReference type="Rhea" id="RHEA:14405"/>
        <dbReference type="ChEBI" id="CHEBI:4167"/>
        <dbReference type="ChEBI" id="CHEBI:15378"/>
        <dbReference type="ChEBI" id="CHEBI:16217"/>
        <dbReference type="ChEBI" id="CHEBI:57783"/>
        <dbReference type="ChEBI" id="CHEBI:58349"/>
        <dbReference type="EC" id="1.1.1.47"/>
    </reaction>
</comment>
<comment type="cofactor">
    <cofactor evidence="1">
        <name>Zn(2+)</name>
        <dbReference type="ChEBI" id="CHEBI:29105"/>
    </cofactor>
</comment>
<comment type="similarity">
    <text evidence="1">Belongs to the zinc-containing alcohol dehydrogenase family. Glucose 1-dehydrogenase subfamily.</text>
</comment>
<comment type="sequence caution" evidence="2">
    <conflict type="erroneous initiation">
        <sequence resource="EMBL-CDS" id="ADY01440"/>
    </conflict>
    <text>Truncated N-terminus.</text>
</comment>
<keyword id="KW-0119">Carbohydrate metabolism</keyword>
<keyword id="KW-0479">Metal-binding</keyword>
<keyword id="KW-0520">NAD</keyword>
<keyword id="KW-0521">NADP</keyword>
<keyword id="KW-0547">Nucleotide-binding</keyword>
<keyword id="KW-0560">Oxidoreductase</keyword>
<keyword id="KW-0862">Zinc</keyword>
<dbReference type="EC" id="1.1.1.47" evidence="1"/>
<dbReference type="EMBL" id="CP002529">
    <property type="protein sequence ID" value="ADY01440.1"/>
    <property type="status" value="ALT_INIT"/>
    <property type="molecule type" value="Genomic_DNA"/>
</dbReference>
<dbReference type="RefSeq" id="WP_048056918.1">
    <property type="nucleotide sequence ID" value="NC_015151.1"/>
</dbReference>
<dbReference type="SMR" id="F0QYK7"/>
<dbReference type="STRING" id="985053.VMUT_1235"/>
<dbReference type="GeneID" id="10288887"/>
<dbReference type="KEGG" id="vmo:VMUT_1235"/>
<dbReference type="eggNOG" id="arCOG01459">
    <property type="taxonomic scope" value="Archaea"/>
</dbReference>
<dbReference type="HOGENOM" id="CLU_026673_1_0_2"/>
<dbReference type="OrthoDB" id="41394at2157"/>
<dbReference type="Proteomes" id="UP000007485">
    <property type="component" value="Chromosome"/>
</dbReference>
<dbReference type="GO" id="GO:0005536">
    <property type="term" value="F:D-glucose binding"/>
    <property type="evidence" value="ECO:0007669"/>
    <property type="project" value="UniProtKB-UniRule"/>
</dbReference>
<dbReference type="GO" id="GO:0047934">
    <property type="term" value="F:glucose 1-dehydrogenase (NAD+) activity"/>
    <property type="evidence" value="ECO:0007669"/>
    <property type="project" value="RHEA"/>
</dbReference>
<dbReference type="GO" id="GO:0047935">
    <property type="term" value="F:glucose 1-dehydrogenase (NADP+) activity"/>
    <property type="evidence" value="ECO:0007669"/>
    <property type="project" value="RHEA"/>
</dbReference>
<dbReference type="GO" id="GO:0070403">
    <property type="term" value="F:NAD+ binding"/>
    <property type="evidence" value="ECO:0007669"/>
    <property type="project" value="UniProtKB-UniRule"/>
</dbReference>
<dbReference type="GO" id="GO:0070401">
    <property type="term" value="F:NADP+ binding"/>
    <property type="evidence" value="ECO:0007669"/>
    <property type="project" value="UniProtKB-UniRule"/>
</dbReference>
<dbReference type="GO" id="GO:0008270">
    <property type="term" value="F:zinc ion binding"/>
    <property type="evidence" value="ECO:0007669"/>
    <property type="project" value="UniProtKB-UniRule"/>
</dbReference>
<dbReference type="GO" id="GO:0019595">
    <property type="term" value="P:non-phosphorylated glucose catabolic process"/>
    <property type="evidence" value="ECO:0007669"/>
    <property type="project" value="UniProtKB-UniRule"/>
</dbReference>
<dbReference type="CDD" id="cd08230">
    <property type="entry name" value="glucose_DH"/>
    <property type="match status" value="1"/>
</dbReference>
<dbReference type="Gene3D" id="3.90.180.10">
    <property type="entry name" value="Medium-chain alcohol dehydrogenases, catalytic domain"/>
    <property type="match status" value="1"/>
</dbReference>
<dbReference type="Gene3D" id="3.40.50.720">
    <property type="entry name" value="NAD(P)-binding Rossmann-like Domain"/>
    <property type="match status" value="1"/>
</dbReference>
<dbReference type="HAMAP" id="MF_02127">
    <property type="entry name" value="Glucose_DH"/>
    <property type="match status" value="1"/>
</dbReference>
<dbReference type="InterPro" id="IPR013154">
    <property type="entry name" value="ADH-like_N"/>
</dbReference>
<dbReference type="InterPro" id="IPR026583">
    <property type="entry name" value="Glc_1-DH_arc"/>
</dbReference>
<dbReference type="InterPro" id="IPR031640">
    <property type="entry name" value="Glu_dehyd_C"/>
</dbReference>
<dbReference type="InterPro" id="IPR011032">
    <property type="entry name" value="GroES-like_sf"/>
</dbReference>
<dbReference type="InterPro" id="IPR036291">
    <property type="entry name" value="NAD(P)-bd_dom_sf"/>
</dbReference>
<dbReference type="PANTHER" id="PTHR43189:SF2">
    <property type="entry name" value="GLUCOSE 1-DEHYDROGENASE"/>
    <property type="match status" value="1"/>
</dbReference>
<dbReference type="PANTHER" id="PTHR43189">
    <property type="entry name" value="ZINC-TYPE ALCOHOL DEHYDROGENASE-LIKE PROTEIN C1198.01-RELATED"/>
    <property type="match status" value="1"/>
</dbReference>
<dbReference type="Pfam" id="PF08240">
    <property type="entry name" value="ADH_N"/>
    <property type="match status" value="1"/>
</dbReference>
<dbReference type="Pfam" id="PF16912">
    <property type="entry name" value="Glu_dehyd_C"/>
    <property type="match status" value="1"/>
</dbReference>
<dbReference type="SUPFAM" id="SSF50129">
    <property type="entry name" value="GroES-like"/>
    <property type="match status" value="1"/>
</dbReference>
<dbReference type="SUPFAM" id="SSF51735">
    <property type="entry name" value="NAD(P)-binding Rossmann-fold domains"/>
    <property type="match status" value="1"/>
</dbReference>
<accession>F0QYK7</accession>
<feature type="chain" id="PRO_0000414846" description="Glucose 1-dehydrogenase 2">
    <location>
        <begin position="1"/>
        <end position="348"/>
    </location>
</feature>
<feature type="binding site" evidence="1">
    <location>
        <position position="39"/>
    </location>
    <ligand>
        <name>Zn(2+)</name>
        <dbReference type="ChEBI" id="CHEBI:29105"/>
        <note>catalytic</note>
    </ligand>
</feature>
<feature type="binding site" evidence="1">
    <location>
        <position position="41"/>
    </location>
    <ligand>
        <name>substrate</name>
    </ligand>
</feature>
<feature type="binding site" evidence="1">
    <location>
        <position position="64"/>
    </location>
    <ligand>
        <name>Zn(2+)</name>
        <dbReference type="ChEBI" id="CHEBI:29105"/>
        <note>catalytic</note>
    </ligand>
</feature>
<feature type="binding site" evidence="1">
    <location>
        <position position="65"/>
    </location>
    <ligand>
        <name>Zn(2+)</name>
        <dbReference type="ChEBI" id="CHEBI:29105"/>
        <note>catalytic</note>
    </ligand>
</feature>
<feature type="binding site" evidence="1">
    <location>
        <position position="110"/>
    </location>
    <ligand>
        <name>substrate</name>
    </ligand>
</feature>
<feature type="binding site" evidence="1">
    <location>
        <position position="146"/>
    </location>
    <ligand>
        <name>substrate</name>
    </ligand>
</feature>
<feature type="binding site" evidence="1">
    <location>
        <position position="146"/>
    </location>
    <ligand>
        <name>Zn(2+)</name>
        <dbReference type="ChEBI" id="CHEBI:29105"/>
        <note>catalytic</note>
    </ligand>
</feature>
<feature type="binding site" evidence="1">
    <location>
        <begin position="178"/>
        <end position="181"/>
    </location>
    <ligand>
        <name>NADP(+)</name>
        <dbReference type="ChEBI" id="CHEBI:58349"/>
    </ligand>
</feature>
<feature type="binding site" evidence="1">
    <location>
        <begin position="260"/>
        <end position="262"/>
    </location>
    <ligand>
        <name>NADP(+)</name>
        <dbReference type="ChEBI" id="CHEBI:58349"/>
    </ligand>
</feature>
<feature type="binding site" evidence="1">
    <location>
        <begin position="289"/>
        <end position="291"/>
    </location>
    <ligand>
        <name>NADP(+)</name>
        <dbReference type="ChEBI" id="CHEBI:58349"/>
    </ligand>
</feature>
<feature type="binding site" evidence="1">
    <location>
        <position position="291"/>
    </location>
    <ligand>
        <name>substrate</name>
    </ligand>
</feature>
<proteinExistence type="inferred from homology"/>